<keyword id="KW-0004">4Fe-4S</keyword>
<keyword id="KW-0028">Amino-acid biosynthesis</keyword>
<keyword id="KW-0285">Flavoprotein</keyword>
<keyword id="KW-0288">FMN</keyword>
<keyword id="KW-0314">Glutamate biosynthesis</keyword>
<keyword id="KW-0408">Iron</keyword>
<keyword id="KW-0411">Iron-sulfur</keyword>
<keyword id="KW-0479">Metal-binding</keyword>
<keyword id="KW-0521">NADP</keyword>
<keyword id="KW-0560">Oxidoreductase</keyword>
<keyword id="KW-1185">Reference proteome</keyword>
<keyword id="KW-0677">Repeat</keyword>
<sequence>MAKRKVPPEFVVERDDYKCIRCLACVRVCSYGANFYDENANRVYTENTKCVGCHFCEAICPTEAITVRKNDFDIRPLAHWTPEHLIGIMKQAETGGVLLTSMGNDRPYFSYFDRIVLNASQVTNPSIDPLREPMEIRTYIGRKEEKLEIEEDEDGTVKLKTEIAPQLKLEVPVMFTAMSYGSISLNAILSLARAARTVGTFFNTGEGGLPKELREFKDNMIVQVASGRFGVSADYLNAGSAVEIKIGQGAKPGIGGHLPGEKVTEPISETRMIPVGTDALSPAPHHDIYSIEDLRQLIYAIKEATRYEKPVGVKIAAVHNVAPIAAGAVRAGADYIVIDGIRGGTGAAPKITRDHVGIPIEFAVAVVDQRLREEGIRHMASIVVAGGIRNSADVIKAIALGADAVYIGTAALISLGCHLCQTCYLGKCNWGIATQDPKLTKRLNPEIGARRAANLLRAWAHEIKEILGGMGINAIESLRGNREVLRGVGLHEYELKLLGIKPAGEAW</sequence>
<dbReference type="EC" id="1.4.1.13" evidence="1"/>
<dbReference type="EMBL" id="AE000512">
    <property type="protein sequence ID" value="AAD35482.1"/>
    <property type="molecule type" value="Genomic_DNA"/>
</dbReference>
<dbReference type="PIR" id="F72382">
    <property type="entry name" value="F72382"/>
</dbReference>
<dbReference type="RefSeq" id="NP_228207.1">
    <property type="nucleotide sequence ID" value="NC_000853.1"/>
</dbReference>
<dbReference type="RefSeq" id="WP_004083229.1">
    <property type="nucleotide sequence ID" value="NZ_CP011107.1"/>
</dbReference>
<dbReference type="SMR" id="Q9WYM8"/>
<dbReference type="FunCoup" id="Q9WYM8">
    <property type="interactions" value="15"/>
</dbReference>
<dbReference type="STRING" id="243274.TM_0397"/>
<dbReference type="PaxDb" id="243274-THEMA_02745"/>
<dbReference type="EnsemblBacteria" id="AAD35482">
    <property type="protein sequence ID" value="AAD35482"/>
    <property type="gene ID" value="TM_0397"/>
</dbReference>
<dbReference type="KEGG" id="tma:TM0397"/>
<dbReference type="KEGG" id="tmi:THEMA_02745"/>
<dbReference type="KEGG" id="tmm:Tmari_0394"/>
<dbReference type="KEGG" id="tmw:THMA_0402"/>
<dbReference type="eggNOG" id="COG0069">
    <property type="taxonomic scope" value="Bacteria"/>
</dbReference>
<dbReference type="eggNOG" id="COG1146">
    <property type="taxonomic scope" value="Bacteria"/>
</dbReference>
<dbReference type="InParanoid" id="Q9WYM8"/>
<dbReference type="OrthoDB" id="9758182at2"/>
<dbReference type="Proteomes" id="UP000008183">
    <property type="component" value="Chromosome"/>
</dbReference>
<dbReference type="GO" id="GO:0051539">
    <property type="term" value="F:4 iron, 4 sulfur cluster binding"/>
    <property type="evidence" value="ECO:0007669"/>
    <property type="project" value="UniProtKB-KW"/>
</dbReference>
<dbReference type="GO" id="GO:0004355">
    <property type="term" value="F:glutamate synthase (NADPH) activity"/>
    <property type="evidence" value="ECO:0007669"/>
    <property type="project" value="UniProtKB-EC"/>
</dbReference>
<dbReference type="GO" id="GO:0046872">
    <property type="term" value="F:metal ion binding"/>
    <property type="evidence" value="ECO:0007669"/>
    <property type="project" value="UniProtKB-KW"/>
</dbReference>
<dbReference type="GO" id="GO:0006537">
    <property type="term" value="P:glutamate biosynthetic process"/>
    <property type="evidence" value="ECO:0007669"/>
    <property type="project" value="UniProtKB-KW"/>
</dbReference>
<dbReference type="CDD" id="cd02808">
    <property type="entry name" value="GltS_FMN"/>
    <property type="match status" value="1"/>
</dbReference>
<dbReference type="Gene3D" id="3.30.70.20">
    <property type="match status" value="1"/>
</dbReference>
<dbReference type="Gene3D" id="3.20.20.70">
    <property type="entry name" value="Aldolase class I"/>
    <property type="match status" value="1"/>
</dbReference>
<dbReference type="InterPro" id="IPR017896">
    <property type="entry name" value="4Fe4S_Fe-S-bd"/>
</dbReference>
<dbReference type="InterPro" id="IPR017900">
    <property type="entry name" value="4Fe4S_Fe_S_CS"/>
</dbReference>
<dbReference type="InterPro" id="IPR013785">
    <property type="entry name" value="Aldolase_TIM"/>
</dbReference>
<dbReference type="InterPro" id="IPR024188">
    <property type="entry name" value="GltB"/>
</dbReference>
<dbReference type="InterPro" id="IPR043578">
    <property type="entry name" value="GltB_archl_type"/>
</dbReference>
<dbReference type="InterPro" id="IPR002932">
    <property type="entry name" value="Glu_synthdom"/>
</dbReference>
<dbReference type="PANTHER" id="PTHR43819">
    <property type="entry name" value="ARCHAEAL-TYPE GLUTAMATE SYNTHASE [NADPH]"/>
    <property type="match status" value="1"/>
</dbReference>
<dbReference type="PANTHER" id="PTHR43819:SF1">
    <property type="entry name" value="ARCHAEAL-TYPE GLUTAMATE SYNTHASE [NADPH]"/>
    <property type="match status" value="1"/>
</dbReference>
<dbReference type="Pfam" id="PF12838">
    <property type="entry name" value="Fer4_7"/>
    <property type="match status" value="1"/>
</dbReference>
<dbReference type="Pfam" id="PF01645">
    <property type="entry name" value="Glu_synthase"/>
    <property type="match status" value="1"/>
</dbReference>
<dbReference type="PIRSF" id="PIRSF500061">
    <property type="entry name" value="GOGAT_lg2_archl"/>
    <property type="match status" value="1"/>
</dbReference>
<dbReference type="PIRSF" id="PIRSF006429">
    <property type="entry name" value="GOGAT_lg_2"/>
    <property type="match status" value="1"/>
</dbReference>
<dbReference type="SUPFAM" id="SSF54862">
    <property type="entry name" value="4Fe-4S ferredoxins"/>
    <property type="match status" value="1"/>
</dbReference>
<dbReference type="SUPFAM" id="SSF51395">
    <property type="entry name" value="FMN-linked oxidoreductases"/>
    <property type="match status" value="1"/>
</dbReference>
<dbReference type="PROSITE" id="PS00198">
    <property type="entry name" value="4FE4S_FER_1"/>
    <property type="match status" value="1"/>
</dbReference>
<dbReference type="PROSITE" id="PS51379">
    <property type="entry name" value="4FE4S_FER_2"/>
    <property type="match status" value="2"/>
</dbReference>
<protein>
    <recommendedName>
        <fullName evidence="4">Archaeal-type glutamate synthase [NADPH]</fullName>
        <ecNumber evidence="1">1.4.1.13</ecNumber>
    </recommendedName>
    <alternativeName>
        <fullName evidence="1">Archaeal-type NADPH-GOGAT</fullName>
    </alternativeName>
</protein>
<gene>
    <name evidence="4" type="primary">gltB</name>
    <name type="ordered locus">TM_0397</name>
</gene>
<accession>Q9WYM8</accession>
<accession>G4FHV6</accession>
<evidence type="ECO:0000250" key="1">
    <source>
        <dbReference type="UniProtKB" id="Q58746"/>
    </source>
</evidence>
<evidence type="ECO:0000255" key="2"/>
<evidence type="ECO:0000255" key="3">
    <source>
        <dbReference type="PROSITE-ProRule" id="PRU00711"/>
    </source>
</evidence>
<evidence type="ECO:0000303" key="4">
    <source>
    </source>
</evidence>
<evidence type="ECO:0000305" key="5"/>
<evidence type="ECO:0000312" key="6">
    <source>
        <dbReference type="EMBL" id="AAD35482.1"/>
    </source>
</evidence>
<name>AGLUS_THEMA</name>
<feature type="chain" id="PRO_0000420608" description="Archaeal-type glutamate synthase [NADPH]">
    <location>
        <begin position="1"/>
        <end position="507"/>
    </location>
</feature>
<feature type="domain" description="4Fe-4S ferredoxin-type 1" evidence="3">
    <location>
        <begin position="10"/>
        <end position="39"/>
    </location>
</feature>
<feature type="domain" description="4Fe-4S ferredoxin-type 2" evidence="3">
    <location>
        <begin position="41"/>
        <end position="70"/>
    </location>
</feature>
<feature type="binding site" evidence="1">
    <location>
        <position position="19"/>
    </location>
    <ligand>
        <name>[4Fe-4S] cluster</name>
        <dbReference type="ChEBI" id="CHEBI:49883"/>
        <label>1</label>
    </ligand>
</feature>
<feature type="binding site" evidence="1">
    <location>
        <position position="22"/>
    </location>
    <ligand>
        <name>[4Fe-4S] cluster</name>
        <dbReference type="ChEBI" id="CHEBI:49883"/>
        <label>1</label>
    </ligand>
</feature>
<feature type="binding site" evidence="1">
    <location>
        <position position="25"/>
    </location>
    <ligand>
        <name>[4Fe-4S] cluster</name>
        <dbReference type="ChEBI" id="CHEBI:49883"/>
        <label>1</label>
    </ligand>
</feature>
<feature type="binding site" evidence="1">
    <location>
        <position position="29"/>
    </location>
    <ligand>
        <name>[4Fe-4S] cluster</name>
        <dbReference type="ChEBI" id="CHEBI:49883"/>
        <label>2</label>
    </ligand>
</feature>
<feature type="binding site" evidence="1">
    <location>
        <position position="50"/>
    </location>
    <ligand>
        <name>[4Fe-4S] cluster</name>
        <dbReference type="ChEBI" id="CHEBI:49883"/>
        <label>2</label>
    </ligand>
</feature>
<feature type="binding site" evidence="1">
    <location>
        <position position="53"/>
    </location>
    <ligand>
        <name>[4Fe-4S] cluster</name>
        <dbReference type="ChEBI" id="CHEBI:49883"/>
        <label>2</label>
    </ligand>
</feature>
<feature type="binding site" evidence="1">
    <location>
        <position position="56"/>
    </location>
    <ligand>
        <name>[4Fe-4S] cluster</name>
        <dbReference type="ChEBI" id="CHEBI:49883"/>
        <label>2</label>
    </ligand>
</feature>
<feature type="binding site" evidence="1">
    <location>
        <position position="60"/>
    </location>
    <ligand>
        <name>[4Fe-4S] cluster</name>
        <dbReference type="ChEBI" id="CHEBI:49883"/>
        <label>1</label>
    </ligand>
</feature>
<comment type="catalytic activity">
    <reaction evidence="1">
        <text>2 L-glutamate + NADP(+) = L-glutamine + 2-oxoglutarate + NADPH + H(+)</text>
        <dbReference type="Rhea" id="RHEA:15501"/>
        <dbReference type="ChEBI" id="CHEBI:15378"/>
        <dbReference type="ChEBI" id="CHEBI:16810"/>
        <dbReference type="ChEBI" id="CHEBI:29985"/>
        <dbReference type="ChEBI" id="CHEBI:57783"/>
        <dbReference type="ChEBI" id="CHEBI:58349"/>
        <dbReference type="ChEBI" id="CHEBI:58359"/>
        <dbReference type="EC" id="1.4.1.13"/>
    </reaction>
</comment>
<comment type="cofactor">
    <cofactor evidence="1">
        <name>FMN</name>
        <dbReference type="ChEBI" id="CHEBI:58210"/>
    </cofactor>
</comment>
<comment type="similarity">
    <text evidence="2">Belongs to the glutamate synthase family.</text>
</comment>
<organism>
    <name type="scientific">Thermotoga maritima (strain ATCC 43589 / DSM 3109 / JCM 10099 / NBRC 100826 / MSB8)</name>
    <dbReference type="NCBI Taxonomy" id="243274"/>
    <lineage>
        <taxon>Bacteria</taxon>
        <taxon>Thermotogati</taxon>
        <taxon>Thermotogota</taxon>
        <taxon>Thermotogae</taxon>
        <taxon>Thermotogales</taxon>
        <taxon>Thermotogaceae</taxon>
        <taxon>Thermotoga</taxon>
    </lineage>
</organism>
<proteinExistence type="inferred from homology"/>
<reference evidence="6" key="1">
    <citation type="journal article" date="1999" name="Nature">
        <title>Evidence for lateral gene transfer between Archaea and Bacteria from genome sequence of Thermotoga maritima.</title>
        <authorList>
            <person name="Nelson K.E."/>
            <person name="Clayton R.A."/>
            <person name="Gill S.R."/>
            <person name="Gwinn M.L."/>
            <person name="Dodson R.J."/>
            <person name="Haft D.H."/>
            <person name="Hickey E.K."/>
            <person name="Peterson J.D."/>
            <person name="Nelson W.C."/>
            <person name="Ketchum K.A."/>
            <person name="McDonald L.A."/>
            <person name="Utterback T.R."/>
            <person name="Malek J.A."/>
            <person name="Linher K.D."/>
            <person name="Garrett M.M."/>
            <person name="Stewart A.M."/>
            <person name="Cotton M.D."/>
            <person name="Pratt M.S."/>
            <person name="Phillips C.A."/>
            <person name="Richardson D.L."/>
            <person name="Heidelberg J.F."/>
            <person name="Sutton G.G."/>
            <person name="Fleischmann R.D."/>
            <person name="Eisen J.A."/>
            <person name="White O."/>
            <person name="Salzberg S.L."/>
            <person name="Smith H.O."/>
            <person name="Venter J.C."/>
            <person name="Fraser C.M."/>
        </authorList>
    </citation>
    <scope>NUCLEOTIDE SEQUENCE [LARGE SCALE GENOMIC DNA]</scope>
    <source>
        <strain>ATCC 43589 / DSM 3109 / JCM 10099 / NBRC 100826 / MSB8</strain>
    </source>
</reference>
<reference evidence="5" key="2">
    <citation type="journal article" date="2001" name="Mol. Biol. Evol.">
        <title>Phylogenetic analyses of two 'archaeal' genes in thermotoga maritima reveal multiple transfers between archaea and bacteria.</title>
        <authorList>
            <person name="Nesbo C.L."/>
            <person name="L'Haridon S."/>
            <person name="Stetter K.O."/>
            <person name="Doolittle W.F."/>
        </authorList>
    </citation>
    <scope>PHYLOGENETIC STUDY</scope>
</reference>